<comment type="function">
    <text evidence="2">E3 ubiquitin-protein ligase which accepts ubiquitin specifically from endoplasmic reticulum-associated UBC7 E2 ligase and transfers it to substrates, promoting their degradation. Component of the endoplasmic reticulum quality control (ERQC) system also called ER-associated degradation (ERAD) involved in ubiquitin-dependent degradation of misfolded endoplasmic reticulum proteins. Also promotes the degradation of normal but naturally short-lived proteins. Protects cells from ER stress-induced apoptosis. Sequesters p53 in the cytoplasm and promotes its degradation, thereby negatively regulating its biological function in transcription, cell cycle regulation and apoptosis (By similarity).</text>
</comment>
<comment type="catalytic activity">
    <reaction evidence="2">
        <text>S-ubiquitinyl-[E2 ubiquitin-conjugating enzyme]-L-cysteine + [acceptor protein]-L-lysine = [E2 ubiquitin-conjugating enzyme]-L-cysteine + N(6)-ubiquitinyl-[acceptor protein]-L-lysine.</text>
        <dbReference type="EC" id="2.3.2.27"/>
    </reaction>
</comment>
<comment type="pathway">
    <text>Protein modification; protein ubiquitination.</text>
</comment>
<comment type="subunit">
    <text evidence="2">Homodimer.</text>
</comment>
<comment type="subcellular location">
    <subcellularLocation>
        <location evidence="1">Endoplasmic reticulum membrane</location>
        <topology evidence="2">Multi-pass membrane protein</topology>
    </subcellularLocation>
</comment>
<comment type="domain">
    <text evidence="1">The RING-type zinc finger is required for E3 ligase activity.</text>
</comment>
<comment type="similarity">
    <text evidence="6">Belongs to the HRD1 family.</text>
</comment>
<reference key="1">
    <citation type="submission" date="2004-05" db="EMBL/GenBank/DDBJ databases">
        <authorList>
            <consortium name="NIH - Xenopus Gene Collection (XGC) project"/>
        </authorList>
    </citation>
    <scope>NUCLEOTIDE SEQUENCE [LARGE SCALE MRNA]</scope>
    <source>
        <tissue>Oocyte</tissue>
    </source>
</reference>
<accession>Q6NRL6</accession>
<sequence length="605" mass="66954">MTGASLALTAAVVAHAYYLKNQFYPTVVYLTKSSPSMAVLYIQAFVLVFLLGKFMGKVFFGQLRAAEMEHLLERSWYAVTETCLAFTVFRDDFSPRFVALFTLLLFLKCFHWLAEDRVDFMERSPNISWLFHFRILALMLLLGVLDAFFVSHAYHSLVIRGASVQLVFGFEYAILMTVILTVFIKYILHSVDLQSENPWDNKAVYMLYTELFTGFIKVLLYVAFMTIMVKVHTFPLFAIRPMYLAMRQFKKAVTDAIMSRRAIRNMNTLYPDATAEELQAMDNVCIICREEMVTGAKRLPCNHIFHTSCLRSWFQRQQTCPTCRMDVLRASLPTQPQTPTEQQNQHQNQAQQQPTPVIPPQPNFPPGILPPFPPGMFPLWPPMGPFPPVPGAPGGNPPDEANPGSSSGSSPRPGETSNVGSESQPGAALPGFPFPPPFLGMPILPPFGLPPMPMPPAGFTGLTDEELRAMEGHERQNLEARLQCLQNIHTLLDAAMLQINQYLTVLASIGPPQPPISSTSTSTSSAASASTAPTTSNISEPVIPVDTTSTVTNTESSQQSAPPAPVSVETLSGAEGGETTTEEPDNVELRRRRLQKLETGTTDSQ</sequence>
<evidence type="ECO:0000250" key="1"/>
<evidence type="ECO:0000250" key="2">
    <source>
        <dbReference type="UniProtKB" id="Q86TM6"/>
    </source>
</evidence>
<evidence type="ECO:0000255" key="3"/>
<evidence type="ECO:0000255" key="4">
    <source>
        <dbReference type="PROSITE-ProRule" id="PRU00175"/>
    </source>
</evidence>
<evidence type="ECO:0000256" key="5">
    <source>
        <dbReference type="SAM" id="MobiDB-lite"/>
    </source>
</evidence>
<evidence type="ECO:0000305" key="6"/>
<organism>
    <name type="scientific">Xenopus laevis</name>
    <name type="common">African clawed frog</name>
    <dbReference type="NCBI Taxonomy" id="8355"/>
    <lineage>
        <taxon>Eukaryota</taxon>
        <taxon>Metazoa</taxon>
        <taxon>Chordata</taxon>
        <taxon>Craniata</taxon>
        <taxon>Vertebrata</taxon>
        <taxon>Euteleostomi</taxon>
        <taxon>Amphibia</taxon>
        <taxon>Batrachia</taxon>
        <taxon>Anura</taxon>
        <taxon>Pipoidea</taxon>
        <taxon>Pipidae</taxon>
        <taxon>Xenopodinae</taxon>
        <taxon>Xenopus</taxon>
        <taxon>Xenopus</taxon>
    </lineage>
</organism>
<dbReference type="EC" id="2.3.2.27" evidence="2"/>
<dbReference type="EMBL" id="BC070731">
    <property type="protein sequence ID" value="AAH70731.1"/>
    <property type="molecule type" value="mRNA"/>
</dbReference>
<dbReference type="RefSeq" id="NP_001084825.1">
    <property type="nucleotide sequence ID" value="NM_001091356.1"/>
</dbReference>
<dbReference type="SMR" id="Q6NRL6"/>
<dbReference type="DNASU" id="431869"/>
<dbReference type="GeneID" id="431869"/>
<dbReference type="KEGG" id="xla:431869"/>
<dbReference type="AGR" id="Xenbase:XB-GENE-1005365"/>
<dbReference type="CTD" id="431869"/>
<dbReference type="Xenbase" id="XB-GENE-1005365">
    <property type="gene designation" value="syvn1.L"/>
</dbReference>
<dbReference type="OrthoDB" id="7759664at2759"/>
<dbReference type="UniPathway" id="UPA00143"/>
<dbReference type="Proteomes" id="UP000186698">
    <property type="component" value="Chromosome 4L"/>
</dbReference>
<dbReference type="Bgee" id="431869">
    <property type="expression patterns" value="Expressed in liver and 19 other cell types or tissues"/>
</dbReference>
<dbReference type="GO" id="GO:0012505">
    <property type="term" value="C:endomembrane system"/>
    <property type="evidence" value="ECO:0000318"/>
    <property type="project" value="GO_Central"/>
</dbReference>
<dbReference type="GO" id="GO:0005789">
    <property type="term" value="C:endoplasmic reticulum membrane"/>
    <property type="evidence" value="ECO:0007669"/>
    <property type="project" value="UniProtKB-SubCell"/>
</dbReference>
<dbReference type="GO" id="GO:0044322">
    <property type="term" value="C:endoplasmic reticulum quality control compartment"/>
    <property type="evidence" value="ECO:0000318"/>
    <property type="project" value="GO_Central"/>
</dbReference>
<dbReference type="GO" id="GO:0061630">
    <property type="term" value="F:ubiquitin protein ligase activity"/>
    <property type="evidence" value="ECO:0000250"/>
    <property type="project" value="UniProtKB"/>
</dbReference>
<dbReference type="GO" id="GO:0008270">
    <property type="term" value="F:zinc ion binding"/>
    <property type="evidence" value="ECO:0007669"/>
    <property type="project" value="UniProtKB-KW"/>
</dbReference>
<dbReference type="GO" id="GO:0036503">
    <property type="term" value="P:ERAD pathway"/>
    <property type="evidence" value="ECO:0000250"/>
    <property type="project" value="UniProtKB"/>
</dbReference>
<dbReference type="GO" id="GO:0043161">
    <property type="term" value="P:proteasome-mediated ubiquitin-dependent protein catabolic process"/>
    <property type="evidence" value="ECO:0000318"/>
    <property type="project" value="GO_Central"/>
</dbReference>
<dbReference type="GO" id="GO:0016567">
    <property type="term" value="P:protein ubiquitination"/>
    <property type="evidence" value="ECO:0007669"/>
    <property type="project" value="UniProtKB-UniPathway"/>
</dbReference>
<dbReference type="GO" id="GO:0006511">
    <property type="term" value="P:ubiquitin-dependent protein catabolic process"/>
    <property type="evidence" value="ECO:0000250"/>
    <property type="project" value="UniProtKB"/>
</dbReference>
<dbReference type="CDD" id="cd16479">
    <property type="entry name" value="RING-H2_synoviolin"/>
    <property type="match status" value="1"/>
</dbReference>
<dbReference type="FunFam" id="3.30.40.10:FF:000088">
    <property type="entry name" value="E3 ubiquitin-protein ligase synoviolin"/>
    <property type="match status" value="1"/>
</dbReference>
<dbReference type="Gene3D" id="3.30.40.10">
    <property type="entry name" value="Zinc/RING finger domain, C3HC4 (zinc finger)"/>
    <property type="match status" value="1"/>
</dbReference>
<dbReference type="InterPro" id="IPR050731">
    <property type="entry name" value="HRD1_E3_ubiq-ligases"/>
</dbReference>
<dbReference type="InterPro" id="IPR001841">
    <property type="entry name" value="Znf_RING"/>
</dbReference>
<dbReference type="InterPro" id="IPR013083">
    <property type="entry name" value="Znf_RING/FYVE/PHD"/>
</dbReference>
<dbReference type="PANTHER" id="PTHR22763:SF184">
    <property type="entry name" value="E3 UBIQUITIN-PROTEIN LIGASE SYNOVIOLIN"/>
    <property type="match status" value="1"/>
</dbReference>
<dbReference type="PANTHER" id="PTHR22763">
    <property type="entry name" value="RING ZINC FINGER PROTEIN"/>
    <property type="match status" value="1"/>
</dbReference>
<dbReference type="Pfam" id="PF13639">
    <property type="entry name" value="zf-RING_2"/>
    <property type="match status" value="1"/>
</dbReference>
<dbReference type="SMART" id="SM00184">
    <property type="entry name" value="RING"/>
    <property type="match status" value="1"/>
</dbReference>
<dbReference type="SUPFAM" id="SSF57850">
    <property type="entry name" value="RING/U-box"/>
    <property type="match status" value="1"/>
</dbReference>
<dbReference type="PROSITE" id="PS50089">
    <property type="entry name" value="ZF_RING_2"/>
    <property type="match status" value="1"/>
</dbReference>
<gene>
    <name type="primary">syvn1-a</name>
    <name type="synonym">hrd1-a</name>
</gene>
<feature type="chain" id="PRO_0000280551" description="E3 ubiquitin-protein ligase synoviolin A">
    <location>
        <begin position="1"/>
        <end position="605"/>
    </location>
</feature>
<feature type="transmembrane region" description="Helical" evidence="3">
    <location>
        <begin position="1"/>
        <end position="19"/>
    </location>
</feature>
<feature type="topological domain" description="Lumenal" evidence="6">
    <location>
        <begin position="20"/>
        <end position="35"/>
    </location>
</feature>
<feature type="transmembrane region" description="Helical" evidence="3">
    <location>
        <begin position="36"/>
        <end position="56"/>
    </location>
</feature>
<feature type="topological domain" description="Cytoplasmic" evidence="6">
    <location>
        <begin position="57"/>
        <end position="92"/>
    </location>
</feature>
<feature type="transmembrane region" description="Helical" evidence="3">
    <location>
        <begin position="93"/>
        <end position="113"/>
    </location>
</feature>
<feature type="topological domain" description="Lumenal" evidence="6">
    <location>
        <begin position="114"/>
        <end position="129"/>
    </location>
</feature>
<feature type="transmembrane region" description="Helical" evidence="3">
    <location>
        <begin position="130"/>
        <end position="150"/>
    </location>
</feature>
<feature type="topological domain" description="Cytoplasmic" evidence="6">
    <location>
        <begin position="151"/>
        <end position="163"/>
    </location>
</feature>
<feature type="transmembrane region" description="Helical" evidence="3">
    <location>
        <begin position="164"/>
        <end position="184"/>
    </location>
</feature>
<feature type="topological domain" description="Lumenal" evidence="6">
    <location>
        <begin position="185"/>
        <end position="218"/>
    </location>
</feature>
<feature type="transmembrane region" description="Helical" evidence="3">
    <location>
        <begin position="219"/>
        <end position="239"/>
    </location>
</feature>
<feature type="topological domain" description="Cytoplasmic" evidence="6">
    <location>
        <begin position="240"/>
        <end position="605"/>
    </location>
</feature>
<feature type="zinc finger region" description="RING-type; atypical" evidence="4">
    <location>
        <begin position="285"/>
        <end position="324"/>
    </location>
</feature>
<feature type="region of interest" description="Interaction with p53/TP53" evidence="1">
    <location>
        <begin position="230"/>
        <end position="264"/>
    </location>
</feature>
<feature type="region of interest" description="Disordered" evidence="5">
    <location>
        <begin position="334"/>
        <end position="433"/>
    </location>
</feature>
<feature type="region of interest" description="Disordered" evidence="5">
    <location>
        <begin position="513"/>
        <end position="605"/>
    </location>
</feature>
<feature type="coiled-coil region" evidence="3">
    <location>
        <begin position="465"/>
        <end position="496"/>
    </location>
</feature>
<feature type="compositionally biased region" description="Low complexity" evidence="5">
    <location>
        <begin position="334"/>
        <end position="355"/>
    </location>
</feature>
<feature type="compositionally biased region" description="Pro residues" evidence="5">
    <location>
        <begin position="356"/>
        <end position="391"/>
    </location>
</feature>
<feature type="compositionally biased region" description="Low complexity" evidence="5">
    <location>
        <begin position="403"/>
        <end position="414"/>
    </location>
</feature>
<feature type="compositionally biased region" description="Polar residues" evidence="5">
    <location>
        <begin position="415"/>
        <end position="424"/>
    </location>
</feature>
<feature type="compositionally biased region" description="Low complexity" evidence="5">
    <location>
        <begin position="516"/>
        <end position="539"/>
    </location>
</feature>
<feature type="compositionally biased region" description="Polar residues" evidence="5">
    <location>
        <begin position="546"/>
        <end position="555"/>
    </location>
</feature>
<feature type="compositionally biased region" description="Low complexity" evidence="5">
    <location>
        <begin position="556"/>
        <end position="579"/>
    </location>
</feature>
<feature type="binding site" evidence="2">
    <location>
        <position position="285"/>
    </location>
    <ligand>
        <name>Zn(2+)</name>
        <dbReference type="ChEBI" id="CHEBI:29105"/>
        <label>1</label>
    </ligand>
</feature>
<feature type="binding site" evidence="2">
    <location>
        <position position="288"/>
    </location>
    <ligand>
        <name>Zn(2+)</name>
        <dbReference type="ChEBI" id="CHEBI:29105"/>
        <label>1</label>
    </ligand>
</feature>
<feature type="binding site" evidence="2">
    <location>
        <position position="301"/>
    </location>
    <ligand>
        <name>Zn(2+)</name>
        <dbReference type="ChEBI" id="CHEBI:29105"/>
        <label>2</label>
    </ligand>
</feature>
<feature type="binding site" evidence="2">
    <location>
        <position position="303"/>
    </location>
    <ligand>
        <name>Zn(2+)</name>
        <dbReference type="ChEBI" id="CHEBI:29105"/>
        <label>2</label>
    </ligand>
</feature>
<feature type="binding site" evidence="2">
    <location>
        <position position="306"/>
    </location>
    <ligand>
        <name>Zn(2+)</name>
        <dbReference type="ChEBI" id="CHEBI:29105"/>
        <label>1</label>
    </ligand>
</feature>
<feature type="binding site" evidence="2">
    <location>
        <position position="309"/>
    </location>
    <ligand>
        <name>Zn(2+)</name>
        <dbReference type="ChEBI" id="CHEBI:29105"/>
        <label>1</label>
    </ligand>
</feature>
<feature type="binding site" evidence="2">
    <location>
        <position position="320"/>
    </location>
    <ligand>
        <name>Zn(2+)</name>
        <dbReference type="ChEBI" id="CHEBI:29105"/>
        <label>2</label>
    </ligand>
</feature>
<feature type="binding site" evidence="2">
    <location>
        <position position="323"/>
    </location>
    <ligand>
        <name>Zn(2+)</name>
        <dbReference type="ChEBI" id="CHEBI:29105"/>
        <label>2</label>
    </ligand>
</feature>
<name>SYVNA_XENLA</name>
<proteinExistence type="evidence at transcript level"/>
<keyword id="KW-0175">Coiled coil</keyword>
<keyword id="KW-0256">Endoplasmic reticulum</keyword>
<keyword id="KW-0472">Membrane</keyword>
<keyword id="KW-0479">Metal-binding</keyword>
<keyword id="KW-1185">Reference proteome</keyword>
<keyword id="KW-0808">Transferase</keyword>
<keyword id="KW-0812">Transmembrane</keyword>
<keyword id="KW-1133">Transmembrane helix</keyword>
<keyword id="KW-0833">Ubl conjugation pathway</keyword>
<keyword id="KW-0862">Zinc</keyword>
<keyword id="KW-0863">Zinc-finger</keyword>
<protein>
    <recommendedName>
        <fullName>E3 ubiquitin-protein ligase synoviolin A</fullName>
        <ecNumber evidence="2">2.3.2.27</ecNumber>
    </recommendedName>
    <alternativeName>
        <fullName evidence="6">RING-type E3 ubiquitin transferase synoviolin A</fullName>
    </alternativeName>
    <alternativeName>
        <fullName>Synovial apoptosis inhibitor-1-A</fullName>
    </alternativeName>
</protein>